<feature type="chain" id="PRO_0000333570" description="WD repeat-containing protein JIP5">
    <location>
        <begin position="1"/>
        <end position="413"/>
    </location>
</feature>
<feature type="repeat" description="WD 1">
    <location>
        <begin position="30"/>
        <end position="70"/>
    </location>
</feature>
<feature type="repeat" description="WD 2">
    <location>
        <begin position="71"/>
        <end position="110"/>
    </location>
</feature>
<feature type="repeat" description="WD 3">
    <location>
        <begin position="120"/>
        <end position="159"/>
    </location>
</feature>
<feature type="repeat" description="WD 4">
    <location>
        <begin position="220"/>
        <end position="263"/>
    </location>
</feature>
<feature type="repeat" description="WD 5">
    <location>
        <begin position="277"/>
        <end position="317"/>
    </location>
</feature>
<feature type="repeat" description="WD 6">
    <location>
        <begin position="321"/>
        <end position="358"/>
    </location>
</feature>
<feature type="region of interest" description="Disordered" evidence="2">
    <location>
        <begin position="39"/>
        <end position="61"/>
    </location>
</feature>
<feature type="region of interest" description="Disordered" evidence="2">
    <location>
        <begin position="353"/>
        <end position="413"/>
    </location>
</feature>
<feature type="compositionally biased region" description="Acidic residues" evidence="2">
    <location>
        <begin position="353"/>
        <end position="365"/>
    </location>
</feature>
<accession>Q875D4</accession>
<accession>A0A090D7L0</accession>
<sequence length="413" mass="44578">MLENLCTLPLSADLFTQVLHPSEPLLTVGLASGKVETFRLPNDDDEEDESGRRTSTSSGRGMIKSIWSTRRHKGSCRHLAYSHDGSAMYSAGTDSVVKHFSPETGNVISKIGLPPRNSATSTTDCPAILHVLSPQTLLLGTDSGGLYIFDLRENGSLNPKPVRKHVPHADYISSITPLPASAESTSGFPKQWVSTGGTTLAVTDLRHGIVATSEDQEDELLCSTIIPTGLGPKKMRSNAVVAVGTGNGILTLWDRGAWDDQQERINVAGGRTKKDGESLDAIVRVPDELGWGKKVIVGVGDGSLSIVDLKRREVQFVLKHDEVEGVSALTFDYQNRLISGGGRTVKVWAESGDDDLDEEEEEEAEATGFKRPARSDSDSDDDSEDERPQKSSNKKQKKGKGNQARSVAFPGLD</sequence>
<gene>
    <name type="primary">JIP5</name>
    <name type="ordered locus">Pa_5_5150</name>
    <name type="ORF">Pa5G0017</name>
    <name type="ORF">PODANS_5_5150</name>
</gene>
<dbReference type="EMBL" id="AL627362">
    <property type="protein sequence ID" value="CAD60602.1"/>
    <property type="molecule type" value="Genomic_DNA"/>
</dbReference>
<dbReference type="EMBL" id="CU633871">
    <property type="protein sequence ID" value="CAP65282.1"/>
    <property type="molecule type" value="Genomic_DNA"/>
</dbReference>
<dbReference type="EMBL" id="FO904940">
    <property type="protein sequence ID" value="CDP29493.1"/>
    <property type="molecule type" value="Genomic_DNA"/>
</dbReference>
<dbReference type="RefSeq" id="XP_001905372.1">
    <property type="nucleotide sequence ID" value="XM_001905337.1"/>
</dbReference>
<dbReference type="SMR" id="Q875D4"/>
<dbReference type="FunCoup" id="Q875D4">
    <property type="interactions" value="102"/>
</dbReference>
<dbReference type="STRING" id="515849.Q875D4"/>
<dbReference type="GeneID" id="6189526"/>
<dbReference type="KEGG" id="pan:PODANSg2397"/>
<dbReference type="VEuPathDB" id="FungiDB:PODANS_5_5150"/>
<dbReference type="eggNOG" id="KOG2444">
    <property type="taxonomic scope" value="Eukaryota"/>
</dbReference>
<dbReference type="HOGENOM" id="CLU_052691_0_0_1"/>
<dbReference type="InParanoid" id="Q875D4"/>
<dbReference type="OrthoDB" id="2288928at2759"/>
<dbReference type="Proteomes" id="UP000001197">
    <property type="component" value="Chromosome 5"/>
</dbReference>
<dbReference type="GO" id="GO:0005730">
    <property type="term" value="C:nucleolus"/>
    <property type="evidence" value="ECO:0007669"/>
    <property type="project" value="UniProtKB-SubCell"/>
</dbReference>
<dbReference type="Gene3D" id="2.130.10.10">
    <property type="entry name" value="YVTN repeat-like/Quinoprotein amine dehydrogenase"/>
    <property type="match status" value="2"/>
</dbReference>
<dbReference type="InterPro" id="IPR015943">
    <property type="entry name" value="WD40/YVTN_repeat-like_dom_sf"/>
</dbReference>
<dbReference type="InterPro" id="IPR036322">
    <property type="entry name" value="WD40_repeat_dom_sf"/>
</dbReference>
<dbReference type="InterPro" id="IPR001680">
    <property type="entry name" value="WD40_rpt"/>
</dbReference>
<dbReference type="InterPro" id="IPR050505">
    <property type="entry name" value="WDR55_POC1"/>
</dbReference>
<dbReference type="PANTHER" id="PTHR44019">
    <property type="entry name" value="WD REPEAT-CONTAINING PROTEIN 55"/>
    <property type="match status" value="1"/>
</dbReference>
<dbReference type="PANTHER" id="PTHR44019:SF20">
    <property type="entry name" value="WD REPEAT-CONTAINING PROTEIN 55"/>
    <property type="match status" value="1"/>
</dbReference>
<dbReference type="SMART" id="SM00320">
    <property type="entry name" value="WD40"/>
    <property type="match status" value="3"/>
</dbReference>
<dbReference type="SUPFAM" id="SSF50978">
    <property type="entry name" value="WD40 repeat-like"/>
    <property type="match status" value="1"/>
</dbReference>
<organism>
    <name type="scientific">Podospora anserina (strain S / ATCC MYA-4624 / DSM 980 / FGSC 10383)</name>
    <name type="common">Pleurage anserina</name>
    <dbReference type="NCBI Taxonomy" id="515849"/>
    <lineage>
        <taxon>Eukaryota</taxon>
        <taxon>Fungi</taxon>
        <taxon>Dikarya</taxon>
        <taxon>Ascomycota</taxon>
        <taxon>Pezizomycotina</taxon>
        <taxon>Sordariomycetes</taxon>
        <taxon>Sordariomycetidae</taxon>
        <taxon>Sordariales</taxon>
        <taxon>Podosporaceae</taxon>
        <taxon>Podospora</taxon>
        <taxon>Podospora anserina</taxon>
    </lineage>
</organism>
<keyword id="KW-0539">Nucleus</keyword>
<keyword id="KW-1185">Reference proteome</keyword>
<keyword id="KW-0677">Repeat</keyword>
<keyword id="KW-0853">WD repeat</keyword>
<evidence type="ECO:0000250" key="1"/>
<evidence type="ECO:0000256" key="2">
    <source>
        <dbReference type="SAM" id="MobiDB-lite"/>
    </source>
</evidence>
<evidence type="ECO:0000305" key="3"/>
<protein>
    <recommendedName>
        <fullName>WD repeat-containing protein JIP5</fullName>
    </recommendedName>
</protein>
<reference key="1">
    <citation type="journal article" date="2003" name="Fungal Genet. Biol.">
        <title>Characterization of the genomic organization of the region bordering the centromere of chromosome V of Podospora anserina by direct sequencing.</title>
        <authorList>
            <person name="Silar P."/>
            <person name="Barreau C."/>
            <person name="Debuchy R."/>
            <person name="Kicka S."/>
            <person name="Turcq B."/>
            <person name="Sainsard-Chanet A."/>
            <person name="Sellem C.H."/>
            <person name="Billault A."/>
            <person name="Cattolico L."/>
            <person name="Duprat S."/>
            <person name="Weissenbach J."/>
        </authorList>
    </citation>
    <scope>NUCLEOTIDE SEQUENCE [LARGE SCALE GENOMIC DNA]</scope>
    <source>
        <strain>s</strain>
    </source>
</reference>
<reference key="2">
    <citation type="journal article" date="2008" name="Genome Biol.">
        <title>The genome sequence of the model ascomycete fungus Podospora anserina.</title>
        <authorList>
            <person name="Espagne E."/>
            <person name="Lespinet O."/>
            <person name="Malagnac F."/>
            <person name="Da Silva C."/>
            <person name="Jaillon O."/>
            <person name="Porcel B.M."/>
            <person name="Couloux A."/>
            <person name="Aury J.-M."/>
            <person name="Segurens B."/>
            <person name="Poulain J."/>
            <person name="Anthouard V."/>
            <person name="Grossetete S."/>
            <person name="Khalili H."/>
            <person name="Coppin E."/>
            <person name="Dequard-Chablat M."/>
            <person name="Picard M."/>
            <person name="Contamine V."/>
            <person name="Arnaise S."/>
            <person name="Bourdais A."/>
            <person name="Berteaux-Lecellier V."/>
            <person name="Gautheret D."/>
            <person name="de Vries R.P."/>
            <person name="Battaglia E."/>
            <person name="Coutinho P.M."/>
            <person name="Danchin E.G.J."/>
            <person name="Henrissat B."/>
            <person name="El Khoury R."/>
            <person name="Sainsard-Chanet A."/>
            <person name="Boivin A."/>
            <person name="Pinan-Lucarre B."/>
            <person name="Sellem C.H."/>
            <person name="Debuchy R."/>
            <person name="Wincker P."/>
            <person name="Weissenbach J."/>
            <person name="Silar P."/>
        </authorList>
    </citation>
    <scope>NUCLEOTIDE SEQUENCE [LARGE SCALE GENOMIC DNA]</scope>
    <source>
        <strain>S / ATCC MYA-4624 / DSM 980 / FGSC 10383</strain>
    </source>
</reference>
<reference key="3">
    <citation type="journal article" date="2014" name="Genetics">
        <title>Maintaining two mating types: Structure of the mating type locus and its role in heterokaryosis in Podospora anserina.</title>
        <authorList>
            <person name="Grognet P."/>
            <person name="Bidard F."/>
            <person name="Kuchly C."/>
            <person name="Tong L.C.H."/>
            <person name="Coppin E."/>
            <person name="Benkhali J.A."/>
            <person name="Couloux A."/>
            <person name="Wincker P."/>
            <person name="Debuchy R."/>
            <person name="Silar P."/>
        </authorList>
    </citation>
    <scope>GENOME REANNOTATION</scope>
    <source>
        <strain>S / ATCC MYA-4624 / DSM 980 / FGSC 10383</strain>
    </source>
</reference>
<comment type="subcellular location">
    <subcellularLocation>
        <location evidence="1">Nucleus</location>
        <location evidence="1">Nucleolus</location>
    </subcellularLocation>
</comment>
<comment type="similarity">
    <text evidence="3">Belongs to the WD repeat WDR55 family.</text>
</comment>
<name>JIP5_PODAN</name>
<proteinExistence type="inferred from homology"/>